<sequence length="61" mass="6861">MPFVTIQFLEGRTDDQKKALVSEVTEVVSKNLKAPKENIHVILEEMKKTDYGVGGVRKSDI</sequence>
<feature type="initiator methionine" description="Removed" evidence="1">
    <location>
        <position position="1"/>
    </location>
</feature>
<feature type="chain" id="PRO_0000209536" description="Probable tautomerase lmo2564">
    <location>
        <begin position="2"/>
        <end position="61"/>
    </location>
</feature>
<feature type="active site" description="Proton acceptor; via imino nitrogen" evidence="1">
    <location>
        <position position="2"/>
    </location>
</feature>
<reference key="1">
    <citation type="journal article" date="2001" name="Science">
        <title>Comparative genomics of Listeria species.</title>
        <authorList>
            <person name="Glaser P."/>
            <person name="Frangeul L."/>
            <person name="Buchrieser C."/>
            <person name="Rusniok C."/>
            <person name="Amend A."/>
            <person name="Baquero F."/>
            <person name="Berche P."/>
            <person name="Bloecker H."/>
            <person name="Brandt P."/>
            <person name="Chakraborty T."/>
            <person name="Charbit A."/>
            <person name="Chetouani F."/>
            <person name="Couve E."/>
            <person name="de Daruvar A."/>
            <person name="Dehoux P."/>
            <person name="Domann E."/>
            <person name="Dominguez-Bernal G."/>
            <person name="Duchaud E."/>
            <person name="Durant L."/>
            <person name="Dussurget O."/>
            <person name="Entian K.-D."/>
            <person name="Fsihi H."/>
            <person name="Garcia-del Portillo F."/>
            <person name="Garrido P."/>
            <person name="Gautier L."/>
            <person name="Goebel W."/>
            <person name="Gomez-Lopez N."/>
            <person name="Hain T."/>
            <person name="Hauf J."/>
            <person name="Jackson D."/>
            <person name="Jones L.-M."/>
            <person name="Kaerst U."/>
            <person name="Kreft J."/>
            <person name="Kuhn M."/>
            <person name="Kunst F."/>
            <person name="Kurapkat G."/>
            <person name="Madueno E."/>
            <person name="Maitournam A."/>
            <person name="Mata Vicente J."/>
            <person name="Ng E."/>
            <person name="Nedjari H."/>
            <person name="Nordsiek G."/>
            <person name="Novella S."/>
            <person name="de Pablos B."/>
            <person name="Perez-Diaz J.-C."/>
            <person name="Purcell R."/>
            <person name="Remmel B."/>
            <person name="Rose M."/>
            <person name="Schlueter T."/>
            <person name="Simoes N."/>
            <person name="Tierrez A."/>
            <person name="Vazquez-Boland J.-A."/>
            <person name="Voss H."/>
            <person name="Wehland J."/>
            <person name="Cossart P."/>
        </authorList>
    </citation>
    <scope>NUCLEOTIDE SEQUENCE [LARGE SCALE GENOMIC DNA]</scope>
    <source>
        <strain>ATCC BAA-679 / EGD-e</strain>
    </source>
</reference>
<evidence type="ECO:0000250" key="1"/>
<evidence type="ECO:0000305" key="2"/>
<name>Y2564_LISMO</name>
<protein>
    <recommendedName>
        <fullName>Probable tautomerase lmo2564</fullName>
        <ecNumber>5.3.2.-</ecNumber>
    </recommendedName>
</protein>
<organism>
    <name type="scientific">Listeria monocytogenes serovar 1/2a (strain ATCC BAA-679 / EGD-e)</name>
    <dbReference type="NCBI Taxonomy" id="169963"/>
    <lineage>
        <taxon>Bacteria</taxon>
        <taxon>Bacillati</taxon>
        <taxon>Bacillota</taxon>
        <taxon>Bacilli</taxon>
        <taxon>Bacillales</taxon>
        <taxon>Listeriaceae</taxon>
        <taxon>Listeria</taxon>
    </lineage>
</organism>
<proteinExistence type="inferred from homology"/>
<accession>Q8Y491</accession>
<dbReference type="EC" id="5.3.2.-"/>
<dbReference type="EMBL" id="AL591983">
    <property type="protein sequence ID" value="CAD00642.1"/>
    <property type="molecule type" value="Genomic_DNA"/>
</dbReference>
<dbReference type="PIR" id="AD1395">
    <property type="entry name" value="AD1395"/>
</dbReference>
<dbReference type="RefSeq" id="NP_466087.1">
    <property type="nucleotide sequence ID" value="NC_003210.1"/>
</dbReference>
<dbReference type="RefSeq" id="WP_003723612.1">
    <property type="nucleotide sequence ID" value="NZ_CP149495.1"/>
</dbReference>
<dbReference type="SMR" id="Q8Y491"/>
<dbReference type="STRING" id="169963.gene:17595275"/>
<dbReference type="PaxDb" id="169963-lmo2564"/>
<dbReference type="EnsemblBacteria" id="CAD00642">
    <property type="protein sequence ID" value="CAD00642"/>
    <property type="gene ID" value="CAD00642"/>
</dbReference>
<dbReference type="GeneID" id="987247"/>
<dbReference type="KEGG" id="lmo:lmo2564"/>
<dbReference type="PATRIC" id="fig|169963.11.peg.2627"/>
<dbReference type="eggNOG" id="COG1942">
    <property type="taxonomic scope" value="Bacteria"/>
</dbReference>
<dbReference type="HOGENOM" id="CLU_148073_5_1_9"/>
<dbReference type="OrthoDB" id="5405937at2"/>
<dbReference type="PhylomeDB" id="Q8Y491"/>
<dbReference type="BioCyc" id="LMON169963:LMO2564-MONOMER"/>
<dbReference type="Proteomes" id="UP000000817">
    <property type="component" value="Chromosome"/>
</dbReference>
<dbReference type="GO" id="GO:0016853">
    <property type="term" value="F:isomerase activity"/>
    <property type="evidence" value="ECO:0000318"/>
    <property type="project" value="GO_Central"/>
</dbReference>
<dbReference type="CDD" id="cd00491">
    <property type="entry name" value="4Oxalocrotonate_Tautomerase"/>
    <property type="match status" value="1"/>
</dbReference>
<dbReference type="FunFam" id="3.30.429.10:FF:000002">
    <property type="entry name" value="Tautomerase"/>
    <property type="match status" value="1"/>
</dbReference>
<dbReference type="Gene3D" id="3.30.429.10">
    <property type="entry name" value="Macrophage Migration Inhibitory Factor"/>
    <property type="match status" value="1"/>
</dbReference>
<dbReference type="InterPro" id="IPR018191">
    <property type="entry name" value="4-OT"/>
</dbReference>
<dbReference type="InterPro" id="IPR004370">
    <property type="entry name" value="4-OT-like_dom"/>
</dbReference>
<dbReference type="InterPro" id="IPR014347">
    <property type="entry name" value="Tautomerase/MIF_sf"/>
</dbReference>
<dbReference type="NCBIfam" id="NF002571">
    <property type="entry name" value="PRK02220.1"/>
    <property type="match status" value="1"/>
</dbReference>
<dbReference type="NCBIfam" id="TIGR00013">
    <property type="entry name" value="taut"/>
    <property type="match status" value="1"/>
</dbReference>
<dbReference type="PANTHER" id="PTHR35530:SF1">
    <property type="entry name" value="2-HYDROXYMUCONATE TAUTOMERASE"/>
    <property type="match status" value="1"/>
</dbReference>
<dbReference type="PANTHER" id="PTHR35530">
    <property type="entry name" value="TAUTOMERASE-RELATED"/>
    <property type="match status" value="1"/>
</dbReference>
<dbReference type="Pfam" id="PF01361">
    <property type="entry name" value="Tautomerase"/>
    <property type="match status" value="1"/>
</dbReference>
<dbReference type="SUPFAM" id="SSF55331">
    <property type="entry name" value="Tautomerase/MIF"/>
    <property type="match status" value="1"/>
</dbReference>
<comment type="similarity">
    <text evidence="2">Belongs to the 4-oxalocrotonate tautomerase family.</text>
</comment>
<gene>
    <name type="ordered locus">lmo2564</name>
</gene>
<keyword id="KW-0413">Isomerase</keyword>
<keyword id="KW-1185">Reference proteome</keyword>